<feature type="chain" id="PRO_1000187436" description="Ornithine aminotransferase">
    <location>
        <begin position="1"/>
        <end position="396"/>
    </location>
</feature>
<feature type="modified residue" description="N6-(pyridoxal phosphate)lysine" evidence="1">
    <location>
        <position position="255"/>
    </location>
</feature>
<gene>
    <name evidence="1" type="primary">rocD</name>
    <name type="ordered locus">BAMEG_3428</name>
</gene>
<reference key="1">
    <citation type="submission" date="2008-10" db="EMBL/GenBank/DDBJ databases">
        <title>Genome sequence of Bacillus anthracis str. CDC 684.</title>
        <authorList>
            <person name="Dodson R.J."/>
            <person name="Munk A.C."/>
            <person name="Brettin T."/>
            <person name="Bruce D."/>
            <person name="Detter C."/>
            <person name="Tapia R."/>
            <person name="Han C."/>
            <person name="Sutton G."/>
            <person name="Sims D."/>
        </authorList>
    </citation>
    <scope>NUCLEOTIDE SEQUENCE [LARGE SCALE GENOMIC DNA]</scope>
    <source>
        <strain>CDC 684 / NRRL 3495</strain>
    </source>
</reference>
<sequence length="396" mass="43272">MIQTKDIIELTDTYGANNYHPLPIVISKAEGVWVEDPEGNRYMDLLSAYSAVNQGHRHPKIINALIDQANRVTLTSRAFHSDQLGPWYEKVAKLTNKEMVLPMNTGAEAVETAIKTARRWAYDVKKVEANRAEIIVCEDNFHGRTMGAVSMSSNEEYKRGFGPMLPGIIVIPYGDLEALKAAITPNTAAFILEPIQGEAGINIPPAGFLKEALEVCKKENVLFVADEIQTGLGRTGKVFACDWDNVTPDMYILGKALGGGVFPISCAAANRDILGVFEPGSHGSTFGGNPLACAVSIAALEVLEEEKLTERSLQLGEKLVGQLKEIDNPMITEVRGKGLFIGIELNEPARPYCEQLKAAGLLCKETHENVIRIAPPLVISEEDLEWAFQKIKAVLS</sequence>
<organism>
    <name type="scientific">Bacillus anthracis (strain CDC 684 / NRRL 3495)</name>
    <dbReference type="NCBI Taxonomy" id="568206"/>
    <lineage>
        <taxon>Bacteria</taxon>
        <taxon>Bacillati</taxon>
        <taxon>Bacillota</taxon>
        <taxon>Bacilli</taxon>
        <taxon>Bacillales</taxon>
        <taxon>Bacillaceae</taxon>
        <taxon>Bacillus</taxon>
        <taxon>Bacillus cereus group</taxon>
    </lineage>
</organism>
<evidence type="ECO:0000255" key="1">
    <source>
        <dbReference type="HAMAP-Rule" id="MF_01689"/>
    </source>
</evidence>
<name>OAT_BACAC</name>
<protein>
    <recommendedName>
        <fullName evidence="1">Ornithine aminotransferase</fullName>
        <shortName evidence="1">OAT</shortName>
        <ecNumber evidence="1">2.6.1.13</ecNumber>
    </recommendedName>
    <alternativeName>
        <fullName evidence="1">Ornithine--oxo-acid aminotransferase</fullName>
    </alternativeName>
</protein>
<dbReference type="EC" id="2.6.1.13" evidence="1"/>
<dbReference type="EMBL" id="CP001215">
    <property type="protein sequence ID" value="ACP17568.1"/>
    <property type="molecule type" value="Genomic_DNA"/>
</dbReference>
<dbReference type="RefSeq" id="WP_000616649.1">
    <property type="nucleotide sequence ID" value="NC_012581.1"/>
</dbReference>
<dbReference type="SMR" id="C3LBX0"/>
<dbReference type="GeneID" id="45021168"/>
<dbReference type="KEGG" id="bah:BAMEG_3428"/>
<dbReference type="HOGENOM" id="CLU_016922_10_3_9"/>
<dbReference type="UniPathway" id="UPA00098">
    <property type="reaction ID" value="UER00358"/>
</dbReference>
<dbReference type="GO" id="GO:0005737">
    <property type="term" value="C:cytoplasm"/>
    <property type="evidence" value="ECO:0007669"/>
    <property type="project" value="UniProtKB-SubCell"/>
</dbReference>
<dbReference type="GO" id="GO:0042802">
    <property type="term" value="F:identical protein binding"/>
    <property type="evidence" value="ECO:0007669"/>
    <property type="project" value="TreeGrafter"/>
</dbReference>
<dbReference type="GO" id="GO:0004587">
    <property type="term" value="F:ornithine aminotransferase activity"/>
    <property type="evidence" value="ECO:0007669"/>
    <property type="project" value="UniProtKB-UniRule"/>
</dbReference>
<dbReference type="GO" id="GO:0030170">
    <property type="term" value="F:pyridoxal phosphate binding"/>
    <property type="evidence" value="ECO:0007669"/>
    <property type="project" value="UniProtKB-UniRule"/>
</dbReference>
<dbReference type="GO" id="GO:0055129">
    <property type="term" value="P:L-proline biosynthetic process"/>
    <property type="evidence" value="ECO:0007669"/>
    <property type="project" value="UniProtKB-UniRule"/>
</dbReference>
<dbReference type="CDD" id="cd00610">
    <property type="entry name" value="OAT_like"/>
    <property type="match status" value="1"/>
</dbReference>
<dbReference type="FunFam" id="3.40.640.10:FF:000011">
    <property type="entry name" value="Ornithine aminotransferase"/>
    <property type="match status" value="1"/>
</dbReference>
<dbReference type="Gene3D" id="3.90.1150.10">
    <property type="entry name" value="Aspartate Aminotransferase, domain 1"/>
    <property type="match status" value="1"/>
</dbReference>
<dbReference type="Gene3D" id="3.40.640.10">
    <property type="entry name" value="Type I PLP-dependent aspartate aminotransferase-like (Major domain)"/>
    <property type="match status" value="1"/>
</dbReference>
<dbReference type="HAMAP" id="MF_01689">
    <property type="entry name" value="Ornith_aminotrans_3"/>
    <property type="match status" value="1"/>
</dbReference>
<dbReference type="InterPro" id="IPR005814">
    <property type="entry name" value="Aminotrans_3"/>
</dbReference>
<dbReference type="InterPro" id="IPR049704">
    <property type="entry name" value="Aminotrans_3_PPA_site"/>
</dbReference>
<dbReference type="InterPro" id="IPR050103">
    <property type="entry name" value="Class-III_PLP-dep_AT"/>
</dbReference>
<dbReference type="InterPro" id="IPR010164">
    <property type="entry name" value="Orn_aminotrans"/>
</dbReference>
<dbReference type="InterPro" id="IPR034757">
    <property type="entry name" value="Ornith_aminotrans_bact"/>
</dbReference>
<dbReference type="InterPro" id="IPR015424">
    <property type="entry name" value="PyrdxlP-dep_Trfase"/>
</dbReference>
<dbReference type="InterPro" id="IPR015421">
    <property type="entry name" value="PyrdxlP-dep_Trfase_major"/>
</dbReference>
<dbReference type="InterPro" id="IPR015422">
    <property type="entry name" value="PyrdxlP-dep_Trfase_small"/>
</dbReference>
<dbReference type="NCBIfam" id="TIGR01885">
    <property type="entry name" value="Orn_aminotrans"/>
    <property type="match status" value="1"/>
</dbReference>
<dbReference type="NCBIfam" id="NF003145">
    <property type="entry name" value="PRK04073.1"/>
    <property type="match status" value="1"/>
</dbReference>
<dbReference type="PANTHER" id="PTHR11986">
    <property type="entry name" value="AMINOTRANSFERASE CLASS III"/>
    <property type="match status" value="1"/>
</dbReference>
<dbReference type="PANTHER" id="PTHR11986:SF18">
    <property type="entry name" value="ORNITHINE AMINOTRANSFERASE, MITOCHONDRIAL"/>
    <property type="match status" value="1"/>
</dbReference>
<dbReference type="Pfam" id="PF00202">
    <property type="entry name" value="Aminotran_3"/>
    <property type="match status" value="1"/>
</dbReference>
<dbReference type="PIRSF" id="PIRSF000521">
    <property type="entry name" value="Transaminase_4ab_Lys_Orn"/>
    <property type="match status" value="1"/>
</dbReference>
<dbReference type="SUPFAM" id="SSF53383">
    <property type="entry name" value="PLP-dependent transferases"/>
    <property type="match status" value="1"/>
</dbReference>
<dbReference type="PROSITE" id="PS00600">
    <property type="entry name" value="AA_TRANSFER_CLASS_3"/>
    <property type="match status" value="1"/>
</dbReference>
<comment type="function">
    <text evidence="1">Catalyzes the interconversion of ornithine to glutamate semialdehyde.</text>
</comment>
<comment type="catalytic activity">
    <reaction evidence="1">
        <text>a 2-oxocarboxylate + L-ornithine = L-glutamate 5-semialdehyde + an L-alpha-amino acid</text>
        <dbReference type="Rhea" id="RHEA:13877"/>
        <dbReference type="ChEBI" id="CHEBI:35179"/>
        <dbReference type="ChEBI" id="CHEBI:46911"/>
        <dbReference type="ChEBI" id="CHEBI:58066"/>
        <dbReference type="ChEBI" id="CHEBI:59869"/>
        <dbReference type="EC" id="2.6.1.13"/>
    </reaction>
</comment>
<comment type="cofactor">
    <cofactor evidence="1">
        <name>pyridoxal 5'-phosphate</name>
        <dbReference type="ChEBI" id="CHEBI:597326"/>
    </cofactor>
</comment>
<comment type="pathway">
    <text evidence="1">Amino-acid biosynthesis; L-proline biosynthesis; L-glutamate 5-semialdehyde from L-ornithine: step 1/1.</text>
</comment>
<comment type="subcellular location">
    <subcellularLocation>
        <location evidence="1">Cytoplasm</location>
    </subcellularLocation>
</comment>
<comment type="similarity">
    <text evidence="1">Belongs to the class-III pyridoxal-phosphate-dependent aminotransferase family. OAT subfamily.</text>
</comment>
<keyword id="KW-0028">Amino-acid biosynthesis</keyword>
<keyword id="KW-0032">Aminotransferase</keyword>
<keyword id="KW-0963">Cytoplasm</keyword>
<keyword id="KW-0641">Proline biosynthesis</keyword>
<keyword id="KW-0663">Pyridoxal phosphate</keyword>
<keyword id="KW-0808">Transferase</keyword>
<proteinExistence type="inferred from homology"/>
<accession>C3LBX0</accession>